<organism>
    <name type="scientific">Shigella boydii serotype 18 (strain CDC 3083-94 / BS512)</name>
    <dbReference type="NCBI Taxonomy" id="344609"/>
    <lineage>
        <taxon>Bacteria</taxon>
        <taxon>Pseudomonadati</taxon>
        <taxon>Pseudomonadota</taxon>
        <taxon>Gammaproteobacteria</taxon>
        <taxon>Enterobacterales</taxon>
        <taxon>Enterobacteriaceae</taxon>
        <taxon>Shigella</taxon>
    </lineage>
</organism>
<comment type="function">
    <text evidence="1">Catalyzes the decarboxylative condensation of pimeloyl-[acyl-carrier protein] and L-alanine to produce 8-amino-7-oxononanoate (AON), [acyl-carrier protein], and carbon dioxide.</text>
</comment>
<comment type="catalytic activity">
    <reaction evidence="1">
        <text>6-carboxyhexanoyl-[ACP] + L-alanine + H(+) = (8S)-8-amino-7-oxononanoate + holo-[ACP] + CO2</text>
        <dbReference type="Rhea" id="RHEA:42288"/>
        <dbReference type="Rhea" id="RHEA-COMP:9685"/>
        <dbReference type="Rhea" id="RHEA-COMP:9955"/>
        <dbReference type="ChEBI" id="CHEBI:15378"/>
        <dbReference type="ChEBI" id="CHEBI:16526"/>
        <dbReference type="ChEBI" id="CHEBI:57972"/>
        <dbReference type="ChEBI" id="CHEBI:64479"/>
        <dbReference type="ChEBI" id="CHEBI:78846"/>
        <dbReference type="ChEBI" id="CHEBI:149468"/>
        <dbReference type="EC" id="2.3.1.47"/>
    </reaction>
</comment>
<comment type="cofactor">
    <cofactor evidence="1">
        <name>pyridoxal 5'-phosphate</name>
        <dbReference type="ChEBI" id="CHEBI:597326"/>
    </cofactor>
</comment>
<comment type="pathway">
    <text evidence="1">Cofactor biosynthesis; biotin biosynthesis.</text>
</comment>
<comment type="subunit">
    <text evidence="1">Homodimer.</text>
</comment>
<comment type="similarity">
    <text evidence="1">Belongs to the class-II pyridoxal-phosphate-dependent aminotransferase family. BioF subfamily.</text>
</comment>
<keyword id="KW-0093">Biotin biosynthesis</keyword>
<keyword id="KW-0663">Pyridoxal phosphate</keyword>
<keyword id="KW-1185">Reference proteome</keyword>
<keyword id="KW-0808">Transferase</keyword>
<sequence>MSWQEKINAALDARRAADALRRRYPVAQGAGRWLVADDRQYLNFSSNDYLGLSHHPQIIRAWQQGAEQFGVGSGGSGHVSGYSVAHQALEEELAEWLGYSRALLFISGFAANQAVIAAMMAKEDRIVADRLSHASLLEAASLSPSQLRRFVHNDVTHLARLLASPCPGQQLVVTEGVFSMDGDSAPLAEIQQVTQQHNGWLMVDDAHGTGVIGEQGRGSCWLQKVKPELLVVTFGKGFGVSGAAVLCSSTVADYLLQFARHLIYNTSMPPAQAQALRASLAVIRRDEGDARREKLVSLIARFRAGVQDLPFTLADSCSAIQPLIVGDNSRALQLAEKLRQQGCWVTAIRPPTVPAGTARLRLTLTAAHEMQDIDRLLEVLHGNG</sequence>
<name>BIOF_SHIB3</name>
<accession>B2TVF4</accession>
<reference key="1">
    <citation type="submission" date="2008-05" db="EMBL/GenBank/DDBJ databases">
        <title>Complete sequence of Shigella boydii serotype 18 strain BS512.</title>
        <authorList>
            <person name="Rasko D.A."/>
            <person name="Rosovitz M."/>
            <person name="Maurelli A.T."/>
            <person name="Myers G."/>
            <person name="Seshadri R."/>
            <person name="Cer R."/>
            <person name="Jiang L."/>
            <person name="Ravel J."/>
            <person name="Sebastian Y."/>
        </authorList>
    </citation>
    <scope>NUCLEOTIDE SEQUENCE [LARGE SCALE GENOMIC DNA]</scope>
    <source>
        <strain>CDC 3083-94 / BS512</strain>
    </source>
</reference>
<feature type="chain" id="PRO_0000381108" description="8-amino-7-oxononanoate synthase">
    <location>
        <begin position="1"/>
        <end position="384"/>
    </location>
</feature>
<feature type="binding site" evidence="1">
    <location>
        <position position="21"/>
    </location>
    <ligand>
        <name>substrate</name>
    </ligand>
</feature>
<feature type="binding site" evidence="1">
    <location>
        <begin position="108"/>
        <end position="109"/>
    </location>
    <ligand>
        <name>pyridoxal 5'-phosphate</name>
        <dbReference type="ChEBI" id="CHEBI:597326"/>
    </ligand>
</feature>
<feature type="binding site" evidence="1">
    <location>
        <position position="133"/>
    </location>
    <ligand>
        <name>substrate</name>
    </ligand>
</feature>
<feature type="binding site" evidence="1">
    <location>
        <position position="179"/>
    </location>
    <ligand>
        <name>pyridoxal 5'-phosphate</name>
        <dbReference type="ChEBI" id="CHEBI:597326"/>
    </ligand>
</feature>
<feature type="binding site" evidence="1">
    <location>
        <position position="207"/>
    </location>
    <ligand>
        <name>pyridoxal 5'-phosphate</name>
        <dbReference type="ChEBI" id="CHEBI:597326"/>
    </ligand>
</feature>
<feature type="binding site" evidence="1">
    <location>
        <position position="233"/>
    </location>
    <ligand>
        <name>pyridoxal 5'-phosphate</name>
        <dbReference type="ChEBI" id="CHEBI:597326"/>
    </ligand>
</feature>
<feature type="binding site" evidence="1">
    <location>
        <position position="352"/>
    </location>
    <ligand>
        <name>substrate</name>
    </ligand>
</feature>
<feature type="modified residue" description="N6-(pyridoxal phosphate)lysine" evidence="1">
    <location>
        <position position="236"/>
    </location>
</feature>
<protein>
    <recommendedName>
        <fullName evidence="1">8-amino-7-oxononanoate synthase</fullName>
        <shortName evidence="1">AONS</shortName>
        <ecNumber evidence="1">2.3.1.47</ecNumber>
    </recommendedName>
    <alternativeName>
        <fullName evidence="1">7-keto-8-amino-pelargonic acid synthase</fullName>
        <shortName evidence="1">7-KAP synthase</shortName>
        <shortName evidence="1">KAPA synthase</shortName>
    </alternativeName>
    <alternativeName>
        <fullName evidence="1">8-amino-7-ketopelargonate synthase</fullName>
    </alternativeName>
</protein>
<proteinExistence type="inferred from homology"/>
<evidence type="ECO:0000255" key="1">
    <source>
        <dbReference type="HAMAP-Rule" id="MF_01693"/>
    </source>
</evidence>
<gene>
    <name evidence="1" type="primary">bioF</name>
    <name type="ordered locus">SbBS512_E2576</name>
</gene>
<dbReference type="EC" id="2.3.1.47" evidence="1"/>
<dbReference type="EMBL" id="CP001063">
    <property type="protein sequence ID" value="ACD08393.1"/>
    <property type="molecule type" value="Genomic_DNA"/>
</dbReference>
<dbReference type="RefSeq" id="WP_000118842.1">
    <property type="nucleotide sequence ID" value="NC_010658.1"/>
</dbReference>
<dbReference type="SMR" id="B2TVF4"/>
<dbReference type="STRING" id="344609.SbBS512_E2576"/>
<dbReference type="KEGG" id="sbc:SbBS512_E2576"/>
<dbReference type="HOGENOM" id="CLU_015846_11_2_6"/>
<dbReference type="UniPathway" id="UPA00078"/>
<dbReference type="Proteomes" id="UP000001030">
    <property type="component" value="Chromosome"/>
</dbReference>
<dbReference type="GO" id="GO:0008710">
    <property type="term" value="F:8-amino-7-oxononanoate synthase activity"/>
    <property type="evidence" value="ECO:0007669"/>
    <property type="project" value="UniProtKB-UniRule"/>
</dbReference>
<dbReference type="GO" id="GO:0030170">
    <property type="term" value="F:pyridoxal phosphate binding"/>
    <property type="evidence" value="ECO:0007669"/>
    <property type="project" value="UniProtKB-UniRule"/>
</dbReference>
<dbReference type="GO" id="GO:0009102">
    <property type="term" value="P:biotin biosynthetic process"/>
    <property type="evidence" value="ECO:0007669"/>
    <property type="project" value="UniProtKB-UniRule"/>
</dbReference>
<dbReference type="CDD" id="cd06454">
    <property type="entry name" value="KBL_like"/>
    <property type="match status" value="1"/>
</dbReference>
<dbReference type="FunFam" id="3.40.640.10:FF:000095">
    <property type="entry name" value="8-amino-7-oxononanoate synthase"/>
    <property type="match status" value="1"/>
</dbReference>
<dbReference type="FunFam" id="3.90.1150.10:FF:000036">
    <property type="entry name" value="8-amino-7-oxononanoate synthase"/>
    <property type="match status" value="1"/>
</dbReference>
<dbReference type="Gene3D" id="3.90.1150.10">
    <property type="entry name" value="Aspartate Aminotransferase, domain 1"/>
    <property type="match status" value="1"/>
</dbReference>
<dbReference type="Gene3D" id="3.40.640.10">
    <property type="entry name" value="Type I PLP-dependent aspartate aminotransferase-like (Major domain)"/>
    <property type="match status" value="1"/>
</dbReference>
<dbReference type="HAMAP" id="MF_01693">
    <property type="entry name" value="BioF_aminotrans_2"/>
    <property type="match status" value="1"/>
</dbReference>
<dbReference type="InterPro" id="IPR001917">
    <property type="entry name" value="Aminotrans_II_pyridoxalP_BS"/>
</dbReference>
<dbReference type="InterPro" id="IPR004839">
    <property type="entry name" value="Aminotransferase_I/II_large"/>
</dbReference>
<dbReference type="InterPro" id="IPR050087">
    <property type="entry name" value="AON_synthase_class-II"/>
</dbReference>
<dbReference type="InterPro" id="IPR004723">
    <property type="entry name" value="AONS_Archaea/Proteobacteria"/>
</dbReference>
<dbReference type="InterPro" id="IPR022834">
    <property type="entry name" value="AONS_Proteobacteria"/>
</dbReference>
<dbReference type="InterPro" id="IPR015424">
    <property type="entry name" value="PyrdxlP-dep_Trfase"/>
</dbReference>
<dbReference type="InterPro" id="IPR015421">
    <property type="entry name" value="PyrdxlP-dep_Trfase_major"/>
</dbReference>
<dbReference type="InterPro" id="IPR015422">
    <property type="entry name" value="PyrdxlP-dep_Trfase_small"/>
</dbReference>
<dbReference type="NCBIfam" id="TIGR00858">
    <property type="entry name" value="bioF"/>
    <property type="match status" value="1"/>
</dbReference>
<dbReference type="PANTHER" id="PTHR13693:SF100">
    <property type="entry name" value="8-AMINO-7-OXONONANOATE SYNTHASE"/>
    <property type="match status" value="1"/>
</dbReference>
<dbReference type="PANTHER" id="PTHR13693">
    <property type="entry name" value="CLASS II AMINOTRANSFERASE/8-AMINO-7-OXONONANOATE SYNTHASE"/>
    <property type="match status" value="1"/>
</dbReference>
<dbReference type="Pfam" id="PF00155">
    <property type="entry name" value="Aminotran_1_2"/>
    <property type="match status" value="1"/>
</dbReference>
<dbReference type="SUPFAM" id="SSF53383">
    <property type="entry name" value="PLP-dependent transferases"/>
    <property type="match status" value="1"/>
</dbReference>
<dbReference type="PROSITE" id="PS00599">
    <property type="entry name" value="AA_TRANSFER_CLASS_2"/>
    <property type="match status" value="1"/>
</dbReference>